<accession>Q8BIZ0</accession>
<accession>E9QK76</accession>
<accession>Q8BIV2</accession>
<feature type="signal peptide" evidence="2">
    <location>
        <begin position="1"/>
        <end position="60"/>
    </location>
</feature>
<feature type="chain" id="PRO_0000004006" description="Protocadherin-20">
    <location>
        <begin position="61"/>
        <end position="952"/>
    </location>
</feature>
<feature type="topological domain" description="Extracellular" evidence="2">
    <location>
        <begin position="61"/>
        <end position="891"/>
    </location>
</feature>
<feature type="transmembrane region" description="Helical" evidence="2">
    <location>
        <begin position="892"/>
        <end position="912"/>
    </location>
</feature>
<feature type="topological domain" description="Cytoplasmic" evidence="2">
    <location>
        <begin position="913"/>
        <end position="952"/>
    </location>
</feature>
<feature type="domain" description="Cadherin 1" evidence="3">
    <location>
        <begin position="64"/>
        <end position="210"/>
    </location>
</feature>
<feature type="domain" description="Cadherin 2" evidence="3">
    <location>
        <begin position="211"/>
        <end position="321"/>
    </location>
</feature>
<feature type="domain" description="Cadherin 3" evidence="3">
    <location>
        <begin position="322"/>
        <end position="536"/>
    </location>
</feature>
<feature type="domain" description="Cadherin 4" evidence="3">
    <location>
        <begin position="537"/>
        <end position="640"/>
    </location>
</feature>
<feature type="domain" description="Cadherin 5" evidence="3">
    <location>
        <begin position="641"/>
        <end position="743"/>
    </location>
</feature>
<feature type="domain" description="Cadherin 6" evidence="3">
    <location>
        <begin position="747"/>
        <end position="864"/>
    </location>
</feature>
<feature type="glycosylation site" description="N-linked (GlcNAc...) asparagine" evidence="2">
    <location>
        <position position="135"/>
    </location>
</feature>
<feature type="glycosylation site" description="N-linked (GlcNAc...) asparagine" evidence="2">
    <location>
        <position position="327"/>
    </location>
</feature>
<feature type="glycosylation site" description="N-linked (GlcNAc...) asparagine" evidence="2">
    <location>
        <position position="333"/>
    </location>
</feature>
<feature type="glycosylation site" description="N-linked (GlcNAc...) asparagine" evidence="2">
    <location>
        <position position="681"/>
    </location>
</feature>
<feature type="glycosylation site" description="N-linked (GlcNAc...) asparagine" evidence="2">
    <location>
        <position position="749"/>
    </location>
</feature>
<feature type="glycosylation site" description="N-linked (GlcNAc...) asparagine" evidence="2">
    <location>
        <position position="804"/>
    </location>
</feature>
<feature type="glycosylation site" description="N-linked (GlcNAc...) asparagine" evidence="2">
    <location>
        <position position="845"/>
    </location>
</feature>
<feature type="glycosylation site" description="N-linked (GlcNAc...) asparagine" evidence="2">
    <location>
        <position position="850"/>
    </location>
</feature>
<feature type="sequence conflict" description="In Ref. 1; BAC38766." evidence="4" ref="1">
    <original>E</original>
    <variation>G</variation>
    <location>
        <position position="720"/>
    </location>
</feature>
<sequence>MRGRGNARSLLVQAVSLRPATWHPCLDMGHLHRPSSRTSHRNLPHVFLLFLFVGPFNCLASYSRATELLYSLNEGLPAGVLIGSLAEDLRLLPRASGRQNQQLLHPERTASEGNPPLSFSLASGGLSGQYVTLNNRSGELHTSAQEIDREALCLDGGGGAAWAGSTSIASSPSSDSCLLLLDVLVLPQEYFRFVKVKIAIRDINDNAPQFPISEISVWVPENSPVNTRLAIEHPAVDPDVGINGVQTYRLLDYHGMFTLDVEENENGERTPYLIVMGALDRETQDQYVSIIIAEDGGSPPLLGSATLTIGISDINDNCPLFIDSQINVTVYGNATVGTPVATVQAVDRDLGTNAQITYSYSQKVPQETKDLFHLDEVTGVIKLSSKIGGSVLQTHKLTILANGPGCIPAVITALVSIIKVVFRPPEIVPRYIANEVDGVVYLKELEPVNTPIAFFTIRDPEGKYKINCFLDGEGPFRLAPYKPYNNEYLLETTKPMDYEVQSFYEIAVVAWNSEGFHVKRIIKVQLLDDNDNAPVFLQPLIELTIEENNAPNAFLTKLYATDADSGEMGRVSYFLGPDAPSYFSLDSVTGILTVSTQLDREEKEKYRYTVRAVDCGTPPRESVATVALTVLDKNDNSPRFINKDFSFFVPENFPGYGEIGVISVTDADAGRNGWVALSVMNQSDIFVIDTGKGMLRAKVSLDREQQSSYTLWVEAVDGGEPALSSTTKITILLLDINDNPPLVLFPQSNMSYLLVLPSTLPGSPVTEVYAVDKDTGMNAVIAYSIIGRRGPRPESFRIDPKTGNITLEEALLQTDYGLHRLLVKVSDHGYPEPLHSTVMVNLFVNDTVSNESYIESLLRKEPEINIEEKEPQISIEPTHRKVESMSCMPTLVALSVISLGSITLVTGMGIYICLRKGKKHHREDDNLEVQIPLKGKIDLCMRERKPVDISNI</sequence>
<proteinExistence type="evidence at transcript level"/>
<reference key="1">
    <citation type="journal article" date="2005" name="Science">
        <title>The transcriptional landscape of the mammalian genome.</title>
        <authorList>
            <person name="Carninci P."/>
            <person name="Kasukawa T."/>
            <person name="Katayama S."/>
            <person name="Gough J."/>
            <person name="Frith M.C."/>
            <person name="Maeda N."/>
            <person name="Oyama R."/>
            <person name="Ravasi T."/>
            <person name="Lenhard B."/>
            <person name="Wells C."/>
            <person name="Kodzius R."/>
            <person name="Shimokawa K."/>
            <person name="Bajic V.B."/>
            <person name="Brenner S.E."/>
            <person name="Batalov S."/>
            <person name="Forrest A.R."/>
            <person name="Zavolan M."/>
            <person name="Davis M.J."/>
            <person name="Wilming L.G."/>
            <person name="Aidinis V."/>
            <person name="Allen J.E."/>
            <person name="Ambesi-Impiombato A."/>
            <person name="Apweiler R."/>
            <person name="Aturaliya R.N."/>
            <person name="Bailey T.L."/>
            <person name="Bansal M."/>
            <person name="Baxter L."/>
            <person name="Beisel K.W."/>
            <person name="Bersano T."/>
            <person name="Bono H."/>
            <person name="Chalk A.M."/>
            <person name="Chiu K.P."/>
            <person name="Choudhary V."/>
            <person name="Christoffels A."/>
            <person name="Clutterbuck D.R."/>
            <person name="Crowe M.L."/>
            <person name="Dalla E."/>
            <person name="Dalrymple B.P."/>
            <person name="de Bono B."/>
            <person name="Della Gatta G."/>
            <person name="di Bernardo D."/>
            <person name="Down T."/>
            <person name="Engstrom P."/>
            <person name="Fagiolini M."/>
            <person name="Faulkner G."/>
            <person name="Fletcher C.F."/>
            <person name="Fukushima T."/>
            <person name="Furuno M."/>
            <person name="Futaki S."/>
            <person name="Gariboldi M."/>
            <person name="Georgii-Hemming P."/>
            <person name="Gingeras T.R."/>
            <person name="Gojobori T."/>
            <person name="Green R.E."/>
            <person name="Gustincich S."/>
            <person name="Harbers M."/>
            <person name="Hayashi Y."/>
            <person name="Hensch T.K."/>
            <person name="Hirokawa N."/>
            <person name="Hill D."/>
            <person name="Huminiecki L."/>
            <person name="Iacono M."/>
            <person name="Ikeo K."/>
            <person name="Iwama A."/>
            <person name="Ishikawa T."/>
            <person name="Jakt M."/>
            <person name="Kanapin A."/>
            <person name="Katoh M."/>
            <person name="Kawasawa Y."/>
            <person name="Kelso J."/>
            <person name="Kitamura H."/>
            <person name="Kitano H."/>
            <person name="Kollias G."/>
            <person name="Krishnan S.P."/>
            <person name="Kruger A."/>
            <person name="Kummerfeld S.K."/>
            <person name="Kurochkin I.V."/>
            <person name="Lareau L.F."/>
            <person name="Lazarevic D."/>
            <person name="Lipovich L."/>
            <person name="Liu J."/>
            <person name="Liuni S."/>
            <person name="McWilliam S."/>
            <person name="Madan Babu M."/>
            <person name="Madera M."/>
            <person name="Marchionni L."/>
            <person name="Matsuda H."/>
            <person name="Matsuzawa S."/>
            <person name="Miki H."/>
            <person name="Mignone F."/>
            <person name="Miyake S."/>
            <person name="Morris K."/>
            <person name="Mottagui-Tabar S."/>
            <person name="Mulder N."/>
            <person name="Nakano N."/>
            <person name="Nakauchi H."/>
            <person name="Ng P."/>
            <person name="Nilsson R."/>
            <person name="Nishiguchi S."/>
            <person name="Nishikawa S."/>
            <person name="Nori F."/>
            <person name="Ohara O."/>
            <person name="Okazaki Y."/>
            <person name="Orlando V."/>
            <person name="Pang K.C."/>
            <person name="Pavan W.J."/>
            <person name="Pavesi G."/>
            <person name="Pesole G."/>
            <person name="Petrovsky N."/>
            <person name="Piazza S."/>
            <person name="Reed J."/>
            <person name="Reid J.F."/>
            <person name="Ring B.Z."/>
            <person name="Ringwald M."/>
            <person name="Rost B."/>
            <person name="Ruan Y."/>
            <person name="Salzberg S.L."/>
            <person name="Sandelin A."/>
            <person name="Schneider C."/>
            <person name="Schoenbach C."/>
            <person name="Sekiguchi K."/>
            <person name="Semple C.A."/>
            <person name="Seno S."/>
            <person name="Sessa L."/>
            <person name="Sheng Y."/>
            <person name="Shibata Y."/>
            <person name="Shimada H."/>
            <person name="Shimada K."/>
            <person name="Silva D."/>
            <person name="Sinclair B."/>
            <person name="Sperling S."/>
            <person name="Stupka E."/>
            <person name="Sugiura K."/>
            <person name="Sultana R."/>
            <person name="Takenaka Y."/>
            <person name="Taki K."/>
            <person name="Tammoja K."/>
            <person name="Tan S.L."/>
            <person name="Tang S."/>
            <person name="Taylor M.S."/>
            <person name="Tegner J."/>
            <person name="Teichmann S.A."/>
            <person name="Ueda H.R."/>
            <person name="van Nimwegen E."/>
            <person name="Verardo R."/>
            <person name="Wei C.L."/>
            <person name="Yagi K."/>
            <person name="Yamanishi H."/>
            <person name="Zabarovsky E."/>
            <person name="Zhu S."/>
            <person name="Zimmer A."/>
            <person name="Hide W."/>
            <person name="Bult C."/>
            <person name="Grimmond S.M."/>
            <person name="Teasdale R.D."/>
            <person name="Liu E.T."/>
            <person name="Brusic V."/>
            <person name="Quackenbush J."/>
            <person name="Wahlestedt C."/>
            <person name="Mattick J.S."/>
            <person name="Hume D.A."/>
            <person name="Kai C."/>
            <person name="Sasaki D."/>
            <person name="Tomaru Y."/>
            <person name="Fukuda S."/>
            <person name="Kanamori-Katayama M."/>
            <person name="Suzuki M."/>
            <person name="Aoki J."/>
            <person name="Arakawa T."/>
            <person name="Iida J."/>
            <person name="Imamura K."/>
            <person name="Itoh M."/>
            <person name="Kato T."/>
            <person name="Kawaji H."/>
            <person name="Kawagashira N."/>
            <person name="Kawashima T."/>
            <person name="Kojima M."/>
            <person name="Kondo S."/>
            <person name="Konno H."/>
            <person name="Nakano K."/>
            <person name="Ninomiya N."/>
            <person name="Nishio T."/>
            <person name="Okada M."/>
            <person name="Plessy C."/>
            <person name="Shibata K."/>
            <person name="Shiraki T."/>
            <person name="Suzuki S."/>
            <person name="Tagami M."/>
            <person name="Waki K."/>
            <person name="Watahiki A."/>
            <person name="Okamura-Oho Y."/>
            <person name="Suzuki H."/>
            <person name="Kawai J."/>
            <person name="Hayashizaki Y."/>
        </authorList>
    </citation>
    <scope>NUCLEOTIDE SEQUENCE [LARGE SCALE MRNA]</scope>
    <source>
        <strain>C57BL/6J</strain>
        <tissue>Hippocampus</tissue>
    </source>
</reference>
<reference key="2">
    <citation type="journal article" date="2009" name="PLoS Biol.">
        <title>Lineage-specific biology revealed by a finished genome assembly of the mouse.</title>
        <authorList>
            <person name="Church D.M."/>
            <person name="Goodstadt L."/>
            <person name="Hillier L.W."/>
            <person name="Zody M.C."/>
            <person name="Goldstein S."/>
            <person name="She X."/>
            <person name="Bult C.J."/>
            <person name="Agarwala R."/>
            <person name="Cherry J.L."/>
            <person name="DiCuccio M."/>
            <person name="Hlavina W."/>
            <person name="Kapustin Y."/>
            <person name="Meric P."/>
            <person name="Maglott D."/>
            <person name="Birtle Z."/>
            <person name="Marques A.C."/>
            <person name="Graves T."/>
            <person name="Zhou S."/>
            <person name="Teague B."/>
            <person name="Potamousis K."/>
            <person name="Churas C."/>
            <person name="Place M."/>
            <person name="Herschleb J."/>
            <person name="Runnheim R."/>
            <person name="Forrest D."/>
            <person name="Amos-Landgraf J."/>
            <person name="Schwartz D.C."/>
            <person name="Cheng Z."/>
            <person name="Lindblad-Toh K."/>
            <person name="Eichler E.E."/>
            <person name="Ponting C.P."/>
        </authorList>
    </citation>
    <scope>NUCLEOTIDE SEQUENCE [LARGE SCALE GENOMIC DNA]</scope>
    <source>
        <strain>C57BL/6J</strain>
    </source>
</reference>
<comment type="function">
    <text>Potential calcium-dependent cell-adhesion protein.</text>
</comment>
<comment type="subcellular location">
    <subcellularLocation>
        <location evidence="1">Cell membrane</location>
        <topology evidence="1">Single-pass type I membrane protein</topology>
    </subcellularLocation>
</comment>
<comment type="sequence caution" evidence="4">
    <conflict type="erroneous initiation">
        <sequence resource="EMBL-CDS" id="BAC34009"/>
    </conflict>
    <text>Truncated N-terminus.</text>
</comment>
<dbReference type="EMBL" id="AK049965">
    <property type="protein sequence ID" value="BAC34009.1"/>
    <property type="status" value="ALT_INIT"/>
    <property type="molecule type" value="mRNA"/>
</dbReference>
<dbReference type="EMBL" id="AK083114">
    <property type="protein sequence ID" value="BAC38766.1"/>
    <property type="molecule type" value="mRNA"/>
</dbReference>
<dbReference type="EMBL" id="AC164553">
    <property type="status" value="NOT_ANNOTATED_CDS"/>
    <property type="molecule type" value="Genomic_DNA"/>
</dbReference>
<dbReference type="CCDS" id="CCDS27306.1"/>
<dbReference type="RefSeq" id="NP_848800.3">
    <property type="nucleotide sequence ID" value="NM_178685.5"/>
</dbReference>
<dbReference type="RefSeq" id="XP_036014467.1">
    <property type="nucleotide sequence ID" value="XM_036158574.1"/>
</dbReference>
<dbReference type="SMR" id="Q8BIZ0"/>
<dbReference type="FunCoup" id="Q8BIZ0">
    <property type="interactions" value="119"/>
</dbReference>
<dbReference type="STRING" id="10090.ENSMUSP00000054774"/>
<dbReference type="GlyCosmos" id="Q8BIZ0">
    <property type="glycosylation" value="8 sites, No reported glycans"/>
</dbReference>
<dbReference type="GlyGen" id="Q8BIZ0">
    <property type="glycosylation" value="8 sites, 2 N-linked glycans (2 sites)"/>
</dbReference>
<dbReference type="iPTMnet" id="Q8BIZ0"/>
<dbReference type="PhosphoSitePlus" id="Q8BIZ0"/>
<dbReference type="PaxDb" id="10090-ENSMUSP00000054774"/>
<dbReference type="ProteomicsDB" id="289317"/>
<dbReference type="DNASU" id="219257"/>
<dbReference type="Ensembl" id="ENSMUST00000061628.7">
    <property type="protein sequence ID" value="ENSMUSP00000054774.6"/>
    <property type="gene ID" value="ENSMUSG00000050505.8"/>
</dbReference>
<dbReference type="Ensembl" id="ENSMUST00000192557.2">
    <property type="protein sequence ID" value="ENSMUSP00000141860.2"/>
    <property type="gene ID" value="ENSMUSG00000050505.8"/>
</dbReference>
<dbReference type="GeneID" id="219257"/>
<dbReference type="KEGG" id="mmu:219257"/>
<dbReference type="UCSC" id="uc007uuh.2">
    <property type="organism name" value="mouse"/>
</dbReference>
<dbReference type="AGR" id="MGI:2443376"/>
<dbReference type="CTD" id="64881"/>
<dbReference type="MGI" id="MGI:2443376">
    <property type="gene designation" value="Pcdh20"/>
</dbReference>
<dbReference type="VEuPathDB" id="HostDB:ENSMUSG00000050505"/>
<dbReference type="eggNOG" id="ENOG502QU9U">
    <property type="taxonomic scope" value="Eukaryota"/>
</dbReference>
<dbReference type="GeneTree" id="ENSGT00940000156743"/>
<dbReference type="HOGENOM" id="CLU_006480_5_2_1"/>
<dbReference type="InParanoid" id="Q8BIZ0"/>
<dbReference type="OMA" id="IEHPAMD"/>
<dbReference type="OrthoDB" id="6252479at2759"/>
<dbReference type="PhylomeDB" id="Q8BIZ0"/>
<dbReference type="TreeFam" id="TF320624"/>
<dbReference type="BioGRID-ORCS" id="219257">
    <property type="hits" value="4 hits in 77 CRISPR screens"/>
</dbReference>
<dbReference type="PRO" id="PR:Q8BIZ0"/>
<dbReference type="Proteomes" id="UP000000589">
    <property type="component" value="Chromosome 14"/>
</dbReference>
<dbReference type="RNAct" id="Q8BIZ0">
    <property type="molecule type" value="protein"/>
</dbReference>
<dbReference type="Bgee" id="ENSMUSG00000050505">
    <property type="expression patterns" value="Expressed in utricle of membranous labyrinth and 118 other cell types or tissues"/>
</dbReference>
<dbReference type="GO" id="GO:0005886">
    <property type="term" value="C:plasma membrane"/>
    <property type="evidence" value="ECO:0007669"/>
    <property type="project" value="UniProtKB-SubCell"/>
</dbReference>
<dbReference type="GO" id="GO:0005509">
    <property type="term" value="F:calcium ion binding"/>
    <property type="evidence" value="ECO:0007669"/>
    <property type="project" value="InterPro"/>
</dbReference>
<dbReference type="GO" id="GO:0007156">
    <property type="term" value="P:homophilic cell adhesion via plasma membrane adhesion molecules"/>
    <property type="evidence" value="ECO:0007669"/>
    <property type="project" value="InterPro"/>
</dbReference>
<dbReference type="CDD" id="cd11304">
    <property type="entry name" value="Cadherin_repeat"/>
    <property type="match status" value="5"/>
</dbReference>
<dbReference type="FunFam" id="2.60.40.60:FF:000005">
    <property type="entry name" value="Protocadherin 9"/>
    <property type="match status" value="1"/>
</dbReference>
<dbReference type="FunFam" id="2.60.40.60:FF:000016">
    <property type="entry name" value="Protocadherin 9"/>
    <property type="match status" value="1"/>
</dbReference>
<dbReference type="FunFam" id="2.60.40.60:FF:000002">
    <property type="entry name" value="Protocadherin alpha 2"/>
    <property type="match status" value="1"/>
</dbReference>
<dbReference type="FunFam" id="2.60.40.60:FF:000007">
    <property type="entry name" value="Protocadherin alpha 2"/>
    <property type="match status" value="1"/>
</dbReference>
<dbReference type="FunFam" id="2.60.40.60:FF:000162">
    <property type="entry name" value="Protocadherin-20"/>
    <property type="match status" value="1"/>
</dbReference>
<dbReference type="FunFam" id="2.60.40.60:FF:000218">
    <property type="entry name" value="Protocadherin-20"/>
    <property type="match status" value="1"/>
</dbReference>
<dbReference type="FunFam" id="2.60.40.60:FF:000145">
    <property type="entry name" value="protocadherin-20"/>
    <property type="match status" value="1"/>
</dbReference>
<dbReference type="Gene3D" id="2.60.40.60">
    <property type="entry name" value="Cadherins"/>
    <property type="match status" value="7"/>
</dbReference>
<dbReference type="InterPro" id="IPR002126">
    <property type="entry name" value="Cadherin-like_dom"/>
</dbReference>
<dbReference type="InterPro" id="IPR015919">
    <property type="entry name" value="Cadherin-like_sf"/>
</dbReference>
<dbReference type="InterPro" id="IPR020894">
    <property type="entry name" value="Cadherin_CS"/>
</dbReference>
<dbReference type="InterPro" id="IPR050174">
    <property type="entry name" value="Protocadherin/Cadherin-CA"/>
</dbReference>
<dbReference type="PANTHER" id="PTHR24028">
    <property type="entry name" value="CADHERIN-87A"/>
    <property type="match status" value="1"/>
</dbReference>
<dbReference type="PANTHER" id="PTHR24028:SF260">
    <property type="entry name" value="PROTOCADHERIN-20"/>
    <property type="match status" value="1"/>
</dbReference>
<dbReference type="Pfam" id="PF00028">
    <property type="entry name" value="Cadherin"/>
    <property type="match status" value="5"/>
</dbReference>
<dbReference type="PRINTS" id="PR00205">
    <property type="entry name" value="CADHERIN"/>
</dbReference>
<dbReference type="SMART" id="SM00112">
    <property type="entry name" value="CA"/>
    <property type="match status" value="7"/>
</dbReference>
<dbReference type="SUPFAM" id="SSF49313">
    <property type="entry name" value="Cadherin-like"/>
    <property type="match status" value="6"/>
</dbReference>
<dbReference type="PROSITE" id="PS00232">
    <property type="entry name" value="CADHERIN_1"/>
    <property type="match status" value="5"/>
</dbReference>
<dbReference type="PROSITE" id="PS50268">
    <property type="entry name" value="CADHERIN_2"/>
    <property type="match status" value="6"/>
</dbReference>
<keyword id="KW-0106">Calcium</keyword>
<keyword id="KW-0130">Cell adhesion</keyword>
<keyword id="KW-1003">Cell membrane</keyword>
<keyword id="KW-0325">Glycoprotein</keyword>
<keyword id="KW-0472">Membrane</keyword>
<keyword id="KW-1185">Reference proteome</keyword>
<keyword id="KW-0677">Repeat</keyword>
<keyword id="KW-0732">Signal</keyword>
<keyword id="KW-0812">Transmembrane</keyword>
<keyword id="KW-1133">Transmembrane helix</keyword>
<evidence type="ECO:0000250" key="1"/>
<evidence type="ECO:0000255" key="2"/>
<evidence type="ECO:0000255" key="3">
    <source>
        <dbReference type="PROSITE-ProRule" id="PRU00043"/>
    </source>
</evidence>
<evidence type="ECO:0000305" key="4"/>
<gene>
    <name type="primary">Pcdh20</name>
</gene>
<name>PCD20_MOUSE</name>
<organism>
    <name type="scientific">Mus musculus</name>
    <name type="common">Mouse</name>
    <dbReference type="NCBI Taxonomy" id="10090"/>
    <lineage>
        <taxon>Eukaryota</taxon>
        <taxon>Metazoa</taxon>
        <taxon>Chordata</taxon>
        <taxon>Craniata</taxon>
        <taxon>Vertebrata</taxon>
        <taxon>Euteleostomi</taxon>
        <taxon>Mammalia</taxon>
        <taxon>Eutheria</taxon>
        <taxon>Euarchontoglires</taxon>
        <taxon>Glires</taxon>
        <taxon>Rodentia</taxon>
        <taxon>Myomorpha</taxon>
        <taxon>Muroidea</taxon>
        <taxon>Muridae</taxon>
        <taxon>Murinae</taxon>
        <taxon>Mus</taxon>
        <taxon>Mus</taxon>
    </lineage>
</organism>
<protein>
    <recommendedName>
        <fullName>Protocadherin-20</fullName>
    </recommendedName>
</protein>